<feature type="chain" id="PRO_0000376251" description="NADH-quinone oxidoreductase subunit B">
    <location>
        <begin position="1"/>
        <end position="159"/>
    </location>
</feature>
<feature type="binding site" evidence="1">
    <location>
        <position position="32"/>
    </location>
    <ligand>
        <name>[4Fe-4S] cluster</name>
        <dbReference type="ChEBI" id="CHEBI:49883"/>
    </ligand>
</feature>
<feature type="binding site" evidence="1">
    <location>
        <position position="33"/>
    </location>
    <ligand>
        <name>[4Fe-4S] cluster</name>
        <dbReference type="ChEBI" id="CHEBI:49883"/>
    </ligand>
</feature>
<feature type="binding site" evidence="1">
    <location>
        <position position="97"/>
    </location>
    <ligand>
        <name>[4Fe-4S] cluster</name>
        <dbReference type="ChEBI" id="CHEBI:49883"/>
    </ligand>
</feature>
<feature type="binding site" evidence="1">
    <location>
        <position position="126"/>
    </location>
    <ligand>
        <name>[4Fe-4S] cluster</name>
        <dbReference type="ChEBI" id="CHEBI:49883"/>
    </ligand>
</feature>
<sequence length="159" mass="17809">MQQAPVVLSTLDKLLNWGRSNSLWPLTYGLACCAIEMMATGGSRFDFDRFGTIFRASPRQSDVMIIAGTLTKKHAEFMRRLYDQMPEPKWVISMGSCANTGGMFNTYATVQGADRVVPVDIYLPGCAPRPETLQYALMVLQDKIRRSKAIKQDAPKRLV</sequence>
<keyword id="KW-0004">4Fe-4S</keyword>
<keyword id="KW-0997">Cell inner membrane</keyword>
<keyword id="KW-1003">Cell membrane</keyword>
<keyword id="KW-0408">Iron</keyword>
<keyword id="KW-0411">Iron-sulfur</keyword>
<keyword id="KW-0472">Membrane</keyword>
<keyword id="KW-0479">Metal-binding</keyword>
<keyword id="KW-0520">NAD</keyword>
<keyword id="KW-0874">Quinone</keyword>
<keyword id="KW-1278">Translocase</keyword>
<keyword id="KW-0813">Transport</keyword>
<keyword id="KW-0830">Ubiquinone</keyword>
<proteinExistence type="inferred from homology"/>
<organism>
    <name type="scientific">Helicobacter pylori (strain Shi470)</name>
    <dbReference type="NCBI Taxonomy" id="512562"/>
    <lineage>
        <taxon>Bacteria</taxon>
        <taxon>Pseudomonadati</taxon>
        <taxon>Campylobacterota</taxon>
        <taxon>Epsilonproteobacteria</taxon>
        <taxon>Campylobacterales</taxon>
        <taxon>Helicobacteraceae</taxon>
        <taxon>Helicobacter</taxon>
    </lineage>
</organism>
<comment type="function">
    <text evidence="1">NDH-1 shuttles electrons from NADH, via FMN and iron-sulfur (Fe-S) centers, to quinones in the respiratory chain. The immediate electron acceptor for the enzyme in this species is believed to be ubiquinone. Couples the redox reaction to proton translocation (for every two electrons transferred, four hydrogen ions are translocated across the cytoplasmic membrane), and thus conserves the redox energy in a proton gradient.</text>
</comment>
<comment type="catalytic activity">
    <reaction evidence="1">
        <text>a quinone + NADH + 5 H(+)(in) = a quinol + NAD(+) + 4 H(+)(out)</text>
        <dbReference type="Rhea" id="RHEA:57888"/>
        <dbReference type="ChEBI" id="CHEBI:15378"/>
        <dbReference type="ChEBI" id="CHEBI:24646"/>
        <dbReference type="ChEBI" id="CHEBI:57540"/>
        <dbReference type="ChEBI" id="CHEBI:57945"/>
        <dbReference type="ChEBI" id="CHEBI:132124"/>
    </reaction>
</comment>
<comment type="cofactor">
    <cofactor evidence="1">
        <name>[4Fe-4S] cluster</name>
        <dbReference type="ChEBI" id="CHEBI:49883"/>
    </cofactor>
    <text evidence="1">Binds 1 [4Fe-4S] cluster.</text>
</comment>
<comment type="subunit">
    <text evidence="1">NDH-1 is composed of 14 different subunits. Subunits NuoB, C, D, E, F, and G constitute the peripheral sector of the complex.</text>
</comment>
<comment type="subcellular location">
    <subcellularLocation>
        <location evidence="1">Cell inner membrane</location>
        <topology evidence="1">Peripheral membrane protein</topology>
        <orientation evidence="1">Cytoplasmic side</orientation>
    </subcellularLocation>
</comment>
<comment type="similarity">
    <text evidence="1">Belongs to the complex I 20 kDa subunit family.</text>
</comment>
<name>NUOB_HELPS</name>
<protein>
    <recommendedName>
        <fullName evidence="1">NADH-quinone oxidoreductase subunit B</fullName>
        <ecNumber evidence="1">7.1.1.-</ecNumber>
    </recommendedName>
    <alternativeName>
        <fullName evidence="1">NADH dehydrogenase I subunit B</fullName>
    </alternativeName>
    <alternativeName>
        <fullName evidence="1">NDH-1 subunit B</fullName>
    </alternativeName>
</protein>
<reference key="1">
    <citation type="submission" date="2008-05" db="EMBL/GenBank/DDBJ databases">
        <title>Genome sequence of Helicobacter pylori from the remote Amazon: traces of Asian ancestry of the first Americans.</title>
        <authorList>
            <person name="Kersulyte D."/>
            <person name="Kalia A."/>
            <person name="Gilman R.H."/>
            <person name="Berg D.E."/>
        </authorList>
    </citation>
    <scope>NUCLEOTIDE SEQUENCE [LARGE SCALE GENOMIC DNA]</scope>
    <source>
        <strain>Shi470</strain>
    </source>
</reference>
<dbReference type="EC" id="7.1.1.-" evidence="1"/>
<dbReference type="EMBL" id="CP001072">
    <property type="protein sequence ID" value="ACD48707.1"/>
    <property type="molecule type" value="Genomic_DNA"/>
</dbReference>
<dbReference type="RefSeq" id="WP_001183511.1">
    <property type="nucleotide sequence ID" value="NC_010698.2"/>
</dbReference>
<dbReference type="SMR" id="B2UV25"/>
<dbReference type="KEGG" id="hps:HPSH_06535"/>
<dbReference type="HOGENOM" id="CLU_055737_7_3_7"/>
<dbReference type="GO" id="GO:0005886">
    <property type="term" value="C:plasma membrane"/>
    <property type="evidence" value="ECO:0007669"/>
    <property type="project" value="UniProtKB-SubCell"/>
</dbReference>
<dbReference type="GO" id="GO:0045271">
    <property type="term" value="C:respiratory chain complex I"/>
    <property type="evidence" value="ECO:0007669"/>
    <property type="project" value="TreeGrafter"/>
</dbReference>
<dbReference type="GO" id="GO:0051539">
    <property type="term" value="F:4 iron, 4 sulfur cluster binding"/>
    <property type="evidence" value="ECO:0007669"/>
    <property type="project" value="UniProtKB-KW"/>
</dbReference>
<dbReference type="GO" id="GO:0005506">
    <property type="term" value="F:iron ion binding"/>
    <property type="evidence" value="ECO:0007669"/>
    <property type="project" value="UniProtKB-UniRule"/>
</dbReference>
<dbReference type="GO" id="GO:0008137">
    <property type="term" value="F:NADH dehydrogenase (ubiquinone) activity"/>
    <property type="evidence" value="ECO:0007669"/>
    <property type="project" value="InterPro"/>
</dbReference>
<dbReference type="GO" id="GO:0050136">
    <property type="term" value="F:NADH:ubiquinone reductase (non-electrogenic) activity"/>
    <property type="evidence" value="ECO:0007669"/>
    <property type="project" value="UniProtKB-UniRule"/>
</dbReference>
<dbReference type="GO" id="GO:0048038">
    <property type="term" value="F:quinone binding"/>
    <property type="evidence" value="ECO:0007669"/>
    <property type="project" value="UniProtKB-KW"/>
</dbReference>
<dbReference type="GO" id="GO:0009060">
    <property type="term" value="P:aerobic respiration"/>
    <property type="evidence" value="ECO:0007669"/>
    <property type="project" value="TreeGrafter"/>
</dbReference>
<dbReference type="GO" id="GO:0015990">
    <property type="term" value="P:electron transport coupled proton transport"/>
    <property type="evidence" value="ECO:0007669"/>
    <property type="project" value="TreeGrafter"/>
</dbReference>
<dbReference type="FunFam" id="3.40.50.12280:FF:000002">
    <property type="entry name" value="NADH-quinone oxidoreductase subunit B"/>
    <property type="match status" value="1"/>
</dbReference>
<dbReference type="Gene3D" id="3.40.50.12280">
    <property type="match status" value="1"/>
</dbReference>
<dbReference type="HAMAP" id="MF_01356">
    <property type="entry name" value="NDH1_NuoB"/>
    <property type="match status" value="1"/>
</dbReference>
<dbReference type="InterPro" id="IPR006137">
    <property type="entry name" value="NADH_UbQ_OxRdtase-like_20kDa"/>
</dbReference>
<dbReference type="InterPro" id="IPR006138">
    <property type="entry name" value="NADH_UQ_OxRdtase_20Kd_su"/>
</dbReference>
<dbReference type="NCBIfam" id="TIGR01957">
    <property type="entry name" value="nuoB_fam"/>
    <property type="match status" value="1"/>
</dbReference>
<dbReference type="NCBIfam" id="NF005012">
    <property type="entry name" value="PRK06411.1"/>
    <property type="match status" value="1"/>
</dbReference>
<dbReference type="PANTHER" id="PTHR11995">
    <property type="entry name" value="NADH DEHYDROGENASE"/>
    <property type="match status" value="1"/>
</dbReference>
<dbReference type="PANTHER" id="PTHR11995:SF14">
    <property type="entry name" value="NADH DEHYDROGENASE [UBIQUINONE] IRON-SULFUR PROTEIN 7, MITOCHONDRIAL"/>
    <property type="match status" value="1"/>
</dbReference>
<dbReference type="Pfam" id="PF01058">
    <property type="entry name" value="Oxidored_q6"/>
    <property type="match status" value="1"/>
</dbReference>
<dbReference type="SUPFAM" id="SSF56770">
    <property type="entry name" value="HydA/Nqo6-like"/>
    <property type="match status" value="1"/>
</dbReference>
<evidence type="ECO:0000255" key="1">
    <source>
        <dbReference type="HAMAP-Rule" id="MF_01356"/>
    </source>
</evidence>
<gene>
    <name evidence="1" type="primary">nuoB</name>
    <name type="ordered locus">HPSH_06535</name>
</gene>
<accession>B2UV25</accession>